<comment type="function">
    <text evidence="5">Exhibits antimicrobial activity against Gram-negative bacteria and Gram-positive bacteria. May act as a ligand for C-C chemokine receptor CCR6. Can bind to mouse (but not human) CCR6 and induce chemotactic activity of CCR6-expressing cells (PubMed:20068036).</text>
</comment>
<comment type="subcellular location">
    <subcellularLocation>
        <location evidence="1">Secreted</location>
    </subcellularLocation>
</comment>
<comment type="tissue specificity">
    <text evidence="4">Tongue, esophagus and trachea.</text>
</comment>
<comment type="similarity">
    <text evidence="6">Belongs to the beta-defensin family.</text>
</comment>
<reference key="1">
    <citation type="journal article" date="2000" name="J. Biol. Chem.">
        <title>A novel murine beta-defensin expressed in tongue, esophagus, and trachea.</title>
        <authorList>
            <person name="Jia H.P."/>
            <person name="Wowk S.A."/>
            <person name="Schutte B.C."/>
            <person name="Lee S.K."/>
            <person name="Vivado A."/>
            <person name="Tack B.F."/>
            <person name="Bevins C.L."/>
            <person name="McCray P.B. Jr."/>
        </authorList>
    </citation>
    <scope>NUCLEOTIDE SEQUENCE [GENOMIC DNA]</scope>
    <scope>TISSUE SPECIFICITY</scope>
    <scope>VARIANT PRO-12</scope>
    <source>
        <strain>129/SvJ</strain>
        <strain>C57BL/6J</strain>
        <strain>FVB/NJ</strain>
        <tissue>Lung</tissue>
    </source>
</reference>
<reference key="2">
    <citation type="journal article" date="2005" name="Science">
        <title>The transcriptional landscape of the mammalian genome.</title>
        <authorList>
            <person name="Carninci P."/>
            <person name="Kasukawa T."/>
            <person name="Katayama S."/>
            <person name="Gough J."/>
            <person name="Frith M.C."/>
            <person name="Maeda N."/>
            <person name="Oyama R."/>
            <person name="Ravasi T."/>
            <person name="Lenhard B."/>
            <person name="Wells C."/>
            <person name="Kodzius R."/>
            <person name="Shimokawa K."/>
            <person name="Bajic V.B."/>
            <person name="Brenner S.E."/>
            <person name="Batalov S."/>
            <person name="Forrest A.R."/>
            <person name="Zavolan M."/>
            <person name="Davis M.J."/>
            <person name="Wilming L.G."/>
            <person name="Aidinis V."/>
            <person name="Allen J.E."/>
            <person name="Ambesi-Impiombato A."/>
            <person name="Apweiler R."/>
            <person name="Aturaliya R.N."/>
            <person name="Bailey T.L."/>
            <person name="Bansal M."/>
            <person name="Baxter L."/>
            <person name="Beisel K.W."/>
            <person name="Bersano T."/>
            <person name="Bono H."/>
            <person name="Chalk A.M."/>
            <person name="Chiu K.P."/>
            <person name="Choudhary V."/>
            <person name="Christoffels A."/>
            <person name="Clutterbuck D.R."/>
            <person name="Crowe M.L."/>
            <person name="Dalla E."/>
            <person name="Dalrymple B.P."/>
            <person name="de Bono B."/>
            <person name="Della Gatta G."/>
            <person name="di Bernardo D."/>
            <person name="Down T."/>
            <person name="Engstrom P."/>
            <person name="Fagiolini M."/>
            <person name="Faulkner G."/>
            <person name="Fletcher C.F."/>
            <person name="Fukushima T."/>
            <person name="Furuno M."/>
            <person name="Futaki S."/>
            <person name="Gariboldi M."/>
            <person name="Georgii-Hemming P."/>
            <person name="Gingeras T.R."/>
            <person name="Gojobori T."/>
            <person name="Green R.E."/>
            <person name="Gustincich S."/>
            <person name="Harbers M."/>
            <person name="Hayashi Y."/>
            <person name="Hensch T.K."/>
            <person name="Hirokawa N."/>
            <person name="Hill D."/>
            <person name="Huminiecki L."/>
            <person name="Iacono M."/>
            <person name="Ikeo K."/>
            <person name="Iwama A."/>
            <person name="Ishikawa T."/>
            <person name="Jakt M."/>
            <person name="Kanapin A."/>
            <person name="Katoh M."/>
            <person name="Kawasawa Y."/>
            <person name="Kelso J."/>
            <person name="Kitamura H."/>
            <person name="Kitano H."/>
            <person name="Kollias G."/>
            <person name="Krishnan S.P."/>
            <person name="Kruger A."/>
            <person name="Kummerfeld S.K."/>
            <person name="Kurochkin I.V."/>
            <person name="Lareau L.F."/>
            <person name="Lazarevic D."/>
            <person name="Lipovich L."/>
            <person name="Liu J."/>
            <person name="Liuni S."/>
            <person name="McWilliam S."/>
            <person name="Madan Babu M."/>
            <person name="Madera M."/>
            <person name="Marchionni L."/>
            <person name="Matsuda H."/>
            <person name="Matsuzawa S."/>
            <person name="Miki H."/>
            <person name="Mignone F."/>
            <person name="Miyake S."/>
            <person name="Morris K."/>
            <person name="Mottagui-Tabar S."/>
            <person name="Mulder N."/>
            <person name="Nakano N."/>
            <person name="Nakauchi H."/>
            <person name="Ng P."/>
            <person name="Nilsson R."/>
            <person name="Nishiguchi S."/>
            <person name="Nishikawa S."/>
            <person name="Nori F."/>
            <person name="Ohara O."/>
            <person name="Okazaki Y."/>
            <person name="Orlando V."/>
            <person name="Pang K.C."/>
            <person name="Pavan W.J."/>
            <person name="Pavesi G."/>
            <person name="Pesole G."/>
            <person name="Petrovsky N."/>
            <person name="Piazza S."/>
            <person name="Reed J."/>
            <person name="Reid J.F."/>
            <person name="Ring B.Z."/>
            <person name="Ringwald M."/>
            <person name="Rost B."/>
            <person name="Ruan Y."/>
            <person name="Salzberg S.L."/>
            <person name="Sandelin A."/>
            <person name="Schneider C."/>
            <person name="Schoenbach C."/>
            <person name="Sekiguchi K."/>
            <person name="Semple C.A."/>
            <person name="Seno S."/>
            <person name="Sessa L."/>
            <person name="Sheng Y."/>
            <person name="Shibata Y."/>
            <person name="Shimada H."/>
            <person name="Shimada K."/>
            <person name="Silva D."/>
            <person name="Sinclair B."/>
            <person name="Sperling S."/>
            <person name="Stupka E."/>
            <person name="Sugiura K."/>
            <person name="Sultana R."/>
            <person name="Takenaka Y."/>
            <person name="Taki K."/>
            <person name="Tammoja K."/>
            <person name="Tan S.L."/>
            <person name="Tang S."/>
            <person name="Taylor M.S."/>
            <person name="Tegner J."/>
            <person name="Teichmann S.A."/>
            <person name="Ueda H.R."/>
            <person name="van Nimwegen E."/>
            <person name="Verardo R."/>
            <person name="Wei C.L."/>
            <person name="Yagi K."/>
            <person name="Yamanishi H."/>
            <person name="Zabarovsky E."/>
            <person name="Zhu S."/>
            <person name="Zimmer A."/>
            <person name="Hide W."/>
            <person name="Bult C."/>
            <person name="Grimmond S.M."/>
            <person name="Teasdale R.D."/>
            <person name="Liu E.T."/>
            <person name="Brusic V."/>
            <person name="Quackenbush J."/>
            <person name="Wahlestedt C."/>
            <person name="Mattick J.S."/>
            <person name="Hume D.A."/>
            <person name="Kai C."/>
            <person name="Sasaki D."/>
            <person name="Tomaru Y."/>
            <person name="Fukuda S."/>
            <person name="Kanamori-Katayama M."/>
            <person name="Suzuki M."/>
            <person name="Aoki J."/>
            <person name="Arakawa T."/>
            <person name="Iida J."/>
            <person name="Imamura K."/>
            <person name="Itoh M."/>
            <person name="Kato T."/>
            <person name="Kawaji H."/>
            <person name="Kawagashira N."/>
            <person name="Kawashima T."/>
            <person name="Kojima M."/>
            <person name="Kondo S."/>
            <person name="Konno H."/>
            <person name="Nakano K."/>
            <person name="Ninomiya N."/>
            <person name="Nishio T."/>
            <person name="Okada M."/>
            <person name="Plessy C."/>
            <person name="Shibata K."/>
            <person name="Shiraki T."/>
            <person name="Suzuki S."/>
            <person name="Tagami M."/>
            <person name="Waki K."/>
            <person name="Watahiki A."/>
            <person name="Okamura-Oho Y."/>
            <person name="Suzuki H."/>
            <person name="Kawai J."/>
            <person name="Hayashizaki Y."/>
        </authorList>
    </citation>
    <scope>NUCLEOTIDE SEQUENCE [LARGE SCALE MRNA]</scope>
    <source>
        <strain>C57BL/6J</strain>
        <tissue>Tongue</tissue>
    </source>
</reference>
<reference key="3">
    <citation type="journal article" date="2010" name="J. Biol. Chem.">
        <title>Specific binding and chemotactic activity of mBD4 and its functional orthologue hBD2 to CCR6-expressing cells.</title>
        <authorList>
            <person name="Roehrl J."/>
            <person name="Yang D."/>
            <person name="Oppenheim J.J."/>
            <person name="Hehlgans T."/>
        </authorList>
    </citation>
    <scope>FUNCTION</scope>
    <scope>BINDING TO CCR6</scope>
</reference>
<proteinExistence type="evidence at protein level"/>
<organism>
    <name type="scientific">Mus musculus</name>
    <name type="common">Mouse</name>
    <dbReference type="NCBI Taxonomy" id="10090"/>
    <lineage>
        <taxon>Eukaryota</taxon>
        <taxon>Metazoa</taxon>
        <taxon>Chordata</taxon>
        <taxon>Craniata</taxon>
        <taxon>Vertebrata</taxon>
        <taxon>Euteleostomi</taxon>
        <taxon>Mammalia</taxon>
        <taxon>Eutheria</taxon>
        <taxon>Euarchontoglires</taxon>
        <taxon>Glires</taxon>
        <taxon>Rodentia</taxon>
        <taxon>Myomorpha</taxon>
        <taxon>Muroidea</taxon>
        <taxon>Muridae</taxon>
        <taxon>Murinae</taxon>
        <taxon>Mus</taxon>
        <taxon>Mus</taxon>
    </lineage>
</organism>
<accession>P82019</accession>
<sequence length="63" mass="7129">MRIHYLLFTFLLVLLSPLAAFTQIINNPITCMTNGAICWGPCPTAFRQIGNCGHFKVRCCKIR</sequence>
<name>DEFB4_MOUSE</name>
<protein>
    <recommendedName>
        <fullName>Beta-defensin 4</fullName>
        <shortName>BD-4</shortName>
        <shortName>mBD-4</shortName>
    </recommendedName>
    <alternativeName>
        <fullName>Defensin, beta 4</fullName>
    </alternativeName>
</protein>
<feature type="signal peptide" evidence="3">
    <location>
        <begin position="1"/>
        <end position="22"/>
    </location>
</feature>
<feature type="peptide" id="PRO_0000006930" description="Beta-defensin 4">
    <location>
        <begin position="23"/>
        <end position="63"/>
    </location>
</feature>
<feature type="modified residue" description="Pyrrolidone carboxylic acid" evidence="2">
    <location>
        <position position="23"/>
    </location>
</feature>
<feature type="disulfide bond" evidence="1">
    <location>
        <begin position="31"/>
        <end position="59"/>
    </location>
</feature>
<feature type="disulfide bond" evidence="1">
    <location>
        <begin position="38"/>
        <end position="52"/>
    </location>
</feature>
<feature type="disulfide bond" evidence="1">
    <location>
        <begin position="42"/>
        <end position="60"/>
    </location>
</feature>
<feature type="sequence variant" description="In strain: FVB." evidence="4">
    <original>L</original>
    <variation>P</variation>
    <location>
        <position position="12"/>
    </location>
</feature>
<feature type="helix" evidence="7">
    <location>
        <begin position="44"/>
        <end position="49"/>
    </location>
</feature>
<feature type="helix" evidence="7">
    <location>
        <begin position="57"/>
        <end position="62"/>
    </location>
</feature>
<evidence type="ECO:0000250" key="1"/>
<evidence type="ECO:0000250" key="2">
    <source>
        <dbReference type="UniProtKB" id="P46162"/>
    </source>
</evidence>
<evidence type="ECO:0000255" key="3"/>
<evidence type="ECO:0000269" key="4">
    <source>
    </source>
</evidence>
<evidence type="ECO:0000269" key="5">
    <source>
    </source>
</evidence>
<evidence type="ECO:0000305" key="6"/>
<evidence type="ECO:0007829" key="7">
    <source>
        <dbReference type="PDB" id="6M56"/>
    </source>
</evidence>
<gene>
    <name type="primary">Defb4</name>
    <name type="synonym">Bdef4</name>
</gene>
<dbReference type="EMBL" id="AF155882">
    <property type="protein sequence ID" value="AAD38852.1"/>
    <property type="molecule type" value="mRNA"/>
</dbReference>
<dbReference type="EMBL" id="AF287475">
    <property type="protein sequence ID" value="AAG02197.1"/>
    <property type="molecule type" value="Genomic_DNA"/>
</dbReference>
<dbReference type="EMBL" id="AF288371">
    <property type="protein sequence ID" value="AAG10514.1"/>
    <property type="molecule type" value="Genomic_DNA"/>
</dbReference>
<dbReference type="EMBL" id="AK009306">
    <property type="protein sequence ID" value="BAB26207.1"/>
    <property type="molecule type" value="mRNA"/>
</dbReference>
<dbReference type="EMBL" id="AK009061">
    <property type="protein sequence ID" value="BAB26051.1"/>
    <property type="molecule type" value="mRNA"/>
</dbReference>
<dbReference type="CCDS" id="CCDS40254.1"/>
<dbReference type="RefSeq" id="NP_062702.1">
    <property type="nucleotide sequence ID" value="NM_019728.4"/>
</dbReference>
<dbReference type="PDB" id="6M56">
    <property type="method" value="NMR"/>
    <property type="chains" value="A=34-63"/>
</dbReference>
<dbReference type="PDBsum" id="6M56"/>
<dbReference type="BMRB" id="P82019"/>
<dbReference type="SMR" id="P82019"/>
<dbReference type="FunCoup" id="P82019">
    <property type="interactions" value="164"/>
</dbReference>
<dbReference type="STRING" id="10090.ENSMUSP00000079808"/>
<dbReference type="PaxDb" id="10090-ENSMUSP00000079808"/>
<dbReference type="DNASU" id="56519"/>
<dbReference type="Ensembl" id="ENSMUST00000081017.3">
    <property type="protein sequence ID" value="ENSMUSP00000079808.3"/>
    <property type="gene ID" value="ENSMUSG00000059230.3"/>
</dbReference>
<dbReference type="GeneID" id="56519"/>
<dbReference type="KEGG" id="mmu:56519"/>
<dbReference type="UCSC" id="uc009laj.2">
    <property type="organism name" value="mouse"/>
</dbReference>
<dbReference type="AGR" id="MGI:1927667"/>
<dbReference type="CTD" id="56519"/>
<dbReference type="MGI" id="MGI:1927667">
    <property type="gene designation" value="Defb4"/>
</dbReference>
<dbReference type="VEuPathDB" id="HostDB:ENSMUSG00000059230"/>
<dbReference type="eggNOG" id="ENOG502SYUI">
    <property type="taxonomic scope" value="Eukaryota"/>
</dbReference>
<dbReference type="GeneTree" id="ENSGT00940000160995"/>
<dbReference type="HOGENOM" id="CLU_189296_4_1_1"/>
<dbReference type="InParanoid" id="P82019"/>
<dbReference type="OMA" id="MTNGAIC"/>
<dbReference type="OrthoDB" id="9623680at2759"/>
<dbReference type="PhylomeDB" id="P82019"/>
<dbReference type="Reactome" id="R-MMU-1461957">
    <property type="pathway name" value="Beta defensins"/>
</dbReference>
<dbReference type="Reactome" id="R-MMU-1461973">
    <property type="pathway name" value="Defensins"/>
</dbReference>
<dbReference type="BioGRID-ORCS" id="56519">
    <property type="hits" value="4 hits in 77 CRISPR screens"/>
</dbReference>
<dbReference type="ChiTaRS" id="Defb4">
    <property type="organism name" value="mouse"/>
</dbReference>
<dbReference type="PRO" id="PR:P82019"/>
<dbReference type="Proteomes" id="UP000000589">
    <property type="component" value="Chromosome 8"/>
</dbReference>
<dbReference type="RNAct" id="P82019">
    <property type="molecule type" value="protein"/>
</dbReference>
<dbReference type="Bgee" id="ENSMUSG00000059230">
    <property type="expression patterns" value="Expressed in esophagus and 18 other cell types or tissues"/>
</dbReference>
<dbReference type="ExpressionAtlas" id="P82019">
    <property type="expression patterns" value="baseline and differential"/>
</dbReference>
<dbReference type="GO" id="GO:0005615">
    <property type="term" value="C:extracellular space"/>
    <property type="evidence" value="ECO:0000266"/>
    <property type="project" value="MGI"/>
</dbReference>
<dbReference type="GO" id="GO:0031731">
    <property type="term" value="F:CCR6 chemokine receptor binding"/>
    <property type="evidence" value="ECO:0000314"/>
    <property type="project" value="UniProtKB"/>
</dbReference>
<dbReference type="GO" id="GO:0006935">
    <property type="term" value="P:chemotaxis"/>
    <property type="evidence" value="ECO:0000314"/>
    <property type="project" value="UniProtKB"/>
</dbReference>
<dbReference type="GO" id="GO:0042742">
    <property type="term" value="P:defense response to bacterium"/>
    <property type="evidence" value="ECO:0000315"/>
    <property type="project" value="MGI"/>
</dbReference>
<dbReference type="GO" id="GO:0050829">
    <property type="term" value="P:defense response to Gram-negative bacterium"/>
    <property type="evidence" value="ECO:0000314"/>
    <property type="project" value="UniProtKB"/>
</dbReference>
<dbReference type="GO" id="GO:0050830">
    <property type="term" value="P:defense response to Gram-positive bacterium"/>
    <property type="evidence" value="ECO:0000314"/>
    <property type="project" value="UniProtKB"/>
</dbReference>
<dbReference type="FunFam" id="3.10.360.10:FF:000001">
    <property type="entry name" value="Beta-defensin 1"/>
    <property type="match status" value="1"/>
</dbReference>
<dbReference type="Gene3D" id="3.10.360.10">
    <property type="entry name" value="Antimicrobial Peptide, Beta-defensin 2, Chain A"/>
    <property type="match status" value="1"/>
</dbReference>
<dbReference type="InterPro" id="IPR001855">
    <property type="entry name" value="Defensin_beta-like"/>
</dbReference>
<dbReference type="PANTHER" id="PTHR20515">
    <property type="entry name" value="BETA-DEFENSIN"/>
    <property type="match status" value="1"/>
</dbReference>
<dbReference type="PANTHER" id="PTHR20515:SF2">
    <property type="entry name" value="DEFENSIN BETA 4A"/>
    <property type="match status" value="1"/>
</dbReference>
<dbReference type="Pfam" id="PF00711">
    <property type="entry name" value="Defensin_beta"/>
    <property type="match status" value="1"/>
</dbReference>
<dbReference type="SUPFAM" id="SSF57392">
    <property type="entry name" value="Defensin-like"/>
    <property type="match status" value="1"/>
</dbReference>
<keyword id="KW-0002">3D-structure</keyword>
<keyword id="KW-0044">Antibiotic</keyword>
<keyword id="KW-0929">Antimicrobial</keyword>
<keyword id="KW-0211">Defensin</keyword>
<keyword id="KW-1015">Disulfide bond</keyword>
<keyword id="KW-0873">Pyrrolidone carboxylic acid</keyword>
<keyword id="KW-1185">Reference proteome</keyword>
<keyword id="KW-0964">Secreted</keyword>
<keyword id="KW-0732">Signal</keyword>